<comment type="function">
    <text evidence="1">Accelerates the degradation of transcripts by removing pyrophosphate from the 5'-end of triphosphorylated RNA, leading to a more labile monophosphorylated state that can stimulate subsequent ribonuclease cleavage.</text>
</comment>
<comment type="cofactor">
    <cofactor evidence="1">
        <name>a divalent metal cation</name>
        <dbReference type="ChEBI" id="CHEBI:60240"/>
    </cofactor>
</comment>
<comment type="similarity">
    <text evidence="1">Belongs to the Nudix hydrolase family. RppH subfamily.</text>
</comment>
<sequence>MIDDDGYRPNVGIVICNRQGQVMWARRFGQHSWQFPQGGINPGESAEQAMYRELFEEVGLSRKDVRILASTRNWLRYKLPKRLVRWDTKPVCIGQKQKWFLLQLVSGDAEINMQTSSTPEFDGWRWVSYWYPVRQVVSFKRDVYRRVMKEFASVVMSLQENTPKPQNASAYRRKRG</sequence>
<gene>
    <name evidence="1" type="primary">rppH</name>
    <name evidence="1" type="synonym">nudH</name>
    <name type="ordered locus">EcSMS35_2977</name>
</gene>
<protein>
    <recommendedName>
        <fullName evidence="1">RNA pyrophosphohydrolase</fullName>
        <ecNumber evidence="1">3.6.1.-</ecNumber>
    </recommendedName>
    <alternativeName>
        <fullName evidence="1">(Di)nucleoside polyphosphate hydrolase</fullName>
    </alternativeName>
</protein>
<reference key="1">
    <citation type="journal article" date="2008" name="J. Bacteriol.">
        <title>Insights into the environmental resistance gene pool from the genome sequence of the multidrug-resistant environmental isolate Escherichia coli SMS-3-5.</title>
        <authorList>
            <person name="Fricke W.F."/>
            <person name="Wright M.S."/>
            <person name="Lindell A.H."/>
            <person name="Harkins D.M."/>
            <person name="Baker-Austin C."/>
            <person name="Ravel J."/>
            <person name="Stepanauskas R."/>
        </authorList>
    </citation>
    <scope>NUCLEOTIDE SEQUENCE [LARGE SCALE GENOMIC DNA]</scope>
    <source>
        <strain>SMS-3-5 / SECEC</strain>
    </source>
</reference>
<keyword id="KW-0378">Hydrolase</keyword>
<dbReference type="EC" id="3.6.1.-" evidence="1"/>
<dbReference type="EMBL" id="CP000970">
    <property type="protein sequence ID" value="ACB18159.1"/>
    <property type="molecule type" value="Genomic_DNA"/>
</dbReference>
<dbReference type="RefSeq" id="WP_000564489.1">
    <property type="nucleotide sequence ID" value="NC_010498.1"/>
</dbReference>
<dbReference type="SMR" id="B1LR27"/>
<dbReference type="GeneID" id="75203778"/>
<dbReference type="KEGG" id="ecm:EcSMS35_2977"/>
<dbReference type="HOGENOM" id="CLU_087195_3_2_6"/>
<dbReference type="Proteomes" id="UP000007011">
    <property type="component" value="Chromosome"/>
</dbReference>
<dbReference type="GO" id="GO:0005737">
    <property type="term" value="C:cytoplasm"/>
    <property type="evidence" value="ECO:0007669"/>
    <property type="project" value="TreeGrafter"/>
</dbReference>
<dbReference type="GO" id="GO:0034353">
    <property type="term" value="F:mRNA 5'-diphosphatase activity"/>
    <property type="evidence" value="ECO:0007669"/>
    <property type="project" value="TreeGrafter"/>
</dbReference>
<dbReference type="GO" id="GO:0006402">
    <property type="term" value="P:mRNA catabolic process"/>
    <property type="evidence" value="ECO:0007669"/>
    <property type="project" value="TreeGrafter"/>
</dbReference>
<dbReference type="CDD" id="cd03671">
    <property type="entry name" value="NUDIX_Ap4A_hydrolase_plant_like"/>
    <property type="match status" value="1"/>
</dbReference>
<dbReference type="FunFam" id="3.90.79.10:FF:000001">
    <property type="entry name" value="RNA pyrophosphohydrolase"/>
    <property type="match status" value="1"/>
</dbReference>
<dbReference type="Gene3D" id="3.90.79.10">
    <property type="entry name" value="Nucleoside Triphosphate Pyrophosphohydrolase"/>
    <property type="match status" value="1"/>
</dbReference>
<dbReference type="HAMAP" id="MF_00298">
    <property type="entry name" value="Nudix_RppH"/>
    <property type="match status" value="1"/>
</dbReference>
<dbReference type="InterPro" id="IPR020476">
    <property type="entry name" value="Nudix_hydrolase"/>
</dbReference>
<dbReference type="InterPro" id="IPR015797">
    <property type="entry name" value="NUDIX_hydrolase-like_dom_sf"/>
</dbReference>
<dbReference type="InterPro" id="IPR020084">
    <property type="entry name" value="NUDIX_hydrolase_CS"/>
</dbReference>
<dbReference type="InterPro" id="IPR000086">
    <property type="entry name" value="NUDIX_hydrolase_dom"/>
</dbReference>
<dbReference type="InterPro" id="IPR022927">
    <property type="entry name" value="RppH"/>
</dbReference>
<dbReference type="NCBIfam" id="NF001934">
    <property type="entry name" value="PRK00714.1-1"/>
    <property type="match status" value="1"/>
</dbReference>
<dbReference type="NCBIfam" id="NF001937">
    <property type="entry name" value="PRK00714.1-4"/>
    <property type="match status" value="1"/>
</dbReference>
<dbReference type="NCBIfam" id="NF001938">
    <property type="entry name" value="PRK00714.1-5"/>
    <property type="match status" value="1"/>
</dbReference>
<dbReference type="PANTHER" id="PTHR23114">
    <property type="entry name" value="M7GPPPN-MRNA HYDROLASE"/>
    <property type="match status" value="1"/>
</dbReference>
<dbReference type="PANTHER" id="PTHR23114:SF17">
    <property type="entry name" value="M7GPPPN-MRNA HYDROLASE"/>
    <property type="match status" value="1"/>
</dbReference>
<dbReference type="Pfam" id="PF00293">
    <property type="entry name" value="NUDIX"/>
    <property type="match status" value="1"/>
</dbReference>
<dbReference type="PRINTS" id="PR00502">
    <property type="entry name" value="NUDIXFAMILY"/>
</dbReference>
<dbReference type="SUPFAM" id="SSF55811">
    <property type="entry name" value="Nudix"/>
    <property type="match status" value="1"/>
</dbReference>
<dbReference type="PROSITE" id="PS51462">
    <property type="entry name" value="NUDIX"/>
    <property type="match status" value="1"/>
</dbReference>
<dbReference type="PROSITE" id="PS00893">
    <property type="entry name" value="NUDIX_BOX"/>
    <property type="match status" value="1"/>
</dbReference>
<feature type="chain" id="PRO_1000119474" description="RNA pyrophosphohydrolase">
    <location>
        <begin position="1"/>
        <end position="176"/>
    </location>
</feature>
<feature type="domain" description="Nudix hydrolase" evidence="1">
    <location>
        <begin position="6"/>
        <end position="149"/>
    </location>
</feature>
<feature type="short sequence motif" description="Nudix box">
    <location>
        <begin position="38"/>
        <end position="59"/>
    </location>
</feature>
<accession>B1LR27</accession>
<organism>
    <name type="scientific">Escherichia coli (strain SMS-3-5 / SECEC)</name>
    <dbReference type="NCBI Taxonomy" id="439855"/>
    <lineage>
        <taxon>Bacteria</taxon>
        <taxon>Pseudomonadati</taxon>
        <taxon>Pseudomonadota</taxon>
        <taxon>Gammaproteobacteria</taxon>
        <taxon>Enterobacterales</taxon>
        <taxon>Enterobacteriaceae</taxon>
        <taxon>Escherichia</taxon>
    </lineage>
</organism>
<evidence type="ECO:0000255" key="1">
    <source>
        <dbReference type="HAMAP-Rule" id="MF_00298"/>
    </source>
</evidence>
<name>RPPH_ECOSM</name>
<proteinExistence type="inferred from homology"/>